<accession>B7J254</accession>
<reference key="1">
    <citation type="journal article" date="2011" name="J. Bacteriol.">
        <title>Whole-genome sequences of thirteen isolates of Borrelia burgdorferi.</title>
        <authorList>
            <person name="Schutzer S.E."/>
            <person name="Fraser-Liggett C.M."/>
            <person name="Casjens S.R."/>
            <person name="Qiu W.G."/>
            <person name="Dunn J.J."/>
            <person name="Mongodin E.F."/>
            <person name="Luft B.J."/>
        </authorList>
    </citation>
    <scope>NUCLEOTIDE SEQUENCE [LARGE SCALE GENOMIC DNA]</scope>
    <source>
        <strain>ZS7</strain>
    </source>
</reference>
<gene>
    <name evidence="1" type="primary">rplX</name>
    <name type="ordered locus">BbuZS7_0500</name>
</gene>
<comment type="function">
    <text evidence="1">One of two assembly initiator proteins, it binds directly to the 5'-end of the 23S rRNA, where it nucleates assembly of the 50S subunit.</text>
</comment>
<comment type="function">
    <text evidence="1">One of the proteins that surrounds the polypeptide exit tunnel on the outside of the subunit.</text>
</comment>
<comment type="subunit">
    <text evidence="1">Part of the 50S ribosomal subunit.</text>
</comment>
<comment type="similarity">
    <text evidence="1">Belongs to the universal ribosomal protein uL24 family.</text>
</comment>
<sequence length="101" mass="11441">MKTKLKIGDSVKILSGKDRGRIGKIASINRKKNKVIVESCNMVKKVIKARTPQEKGRIIDKEAAIDISNVMIFVKGTSSRLGIRFENNEKIRYLKKNGQRI</sequence>
<evidence type="ECO:0000255" key="1">
    <source>
        <dbReference type="HAMAP-Rule" id="MF_01326"/>
    </source>
</evidence>
<evidence type="ECO:0000305" key="2"/>
<name>RL24_BORBZ</name>
<protein>
    <recommendedName>
        <fullName evidence="1">Large ribosomal subunit protein uL24</fullName>
    </recommendedName>
    <alternativeName>
        <fullName evidence="2">50S ribosomal protein L24</fullName>
    </alternativeName>
</protein>
<organism>
    <name type="scientific">Borreliella burgdorferi (strain ZS7)</name>
    <name type="common">Borrelia burgdorferi</name>
    <dbReference type="NCBI Taxonomy" id="445985"/>
    <lineage>
        <taxon>Bacteria</taxon>
        <taxon>Pseudomonadati</taxon>
        <taxon>Spirochaetota</taxon>
        <taxon>Spirochaetia</taxon>
        <taxon>Spirochaetales</taxon>
        <taxon>Borreliaceae</taxon>
        <taxon>Borreliella</taxon>
    </lineage>
</organism>
<proteinExistence type="inferred from homology"/>
<dbReference type="EMBL" id="CP001205">
    <property type="protein sequence ID" value="ACK74427.1"/>
    <property type="molecule type" value="Genomic_DNA"/>
</dbReference>
<dbReference type="RefSeq" id="WP_002557080.1">
    <property type="nucleotide sequence ID" value="NC_011728.1"/>
</dbReference>
<dbReference type="SMR" id="B7J254"/>
<dbReference type="GeneID" id="56567924"/>
<dbReference type="KEGG" id="bbz:BbuZS7_0500"/>
<dbReference type="HOGENOM" id="CLU_093315_2_3_12"/>
<dbReference type="Proteomes" id="UP000006901">
    <property type="component" value="Chromosome"/>
</dbReference>
<dbReference type="GO" id="GO:1990904">
    <property type="term" value="C:ribonucleoprotein complex"/>
    <property type="evidence" value="ECO:0007669"/>
    <property type="project" value="UniProtKB-KW"/>
</dbReference>
<dbReference type="GO" id="GO:0005840">
    <property type="term" value="C:ribosome"/>
    <property type="evidence" value="ECO:0007669"/>
    <property type="project" value="UniProtKB-KW"/>
</dbReference>
<dbReference type="GO" id="GO:0019843">
    <property type="term" value="F:rRNA binding"/>
    <property type="evidence" value="ECO:0007669"/>
    <property type="project" value="UniProtKB-UniRule"/>
</dbReference>
<dbReference type="GO" id="GO:0003735">
    <property type="term" value="F:structural constituent of ribosome"/>
    <property type="evidence" value="ECO:0007669"/>
    <property type="project" value="InterPro"/>
</dbReference>
<dbReference type="GO" id="GO:0006412">
    <property type="term" value="P:translation"/>
    <property type="evidence" value="ECO:0007669"/>
    <property type="project" value="UniProtKB-UniRule"/>
</dbReference>
<dbReference type="CDD" id="cd06089">
    <property type="entry name" value="KOW_RPL26"/>
    <property type="match status" value="1"/>
</dbReference>
<dbReference type="Gene3D" id="2.30.30.30">
    <property type="match status" value="1"/>
</dbReference>
<dbReference type="HAMAP" id="MF_01326_B">
    <property type="entry name" value="Ribosomal_uL24_B"/>
    <property type="match status" value="1"/>
</dbReference>
<dbReference type="InterPro" id="IPR005824">
    <property type="entry name" value="KOW"/>
</dbReference>
<dbReference type="InterPro" id="IPR014722">
    <property type="entry name" value="Rib_uL2_dom2"/>
</dbReference>
<dbReference type="InterPro" id="IPR003256">
    <property type="entry name" value="Ribosomal_uL24"/>
</dbReference>
<dbReference type="InterPro" id="IPR005825">
    <property type="entry name" value="Ribosomal_uL24_CS"/>
</dbReference>
<dbReference type="InterPro" id="IPR041988">
    <property type="entry name" value="Ribosomal_uL24_KOW"/>
</dbReference>
<dbReference type="InterPro" id="IPR008991">
    <property type="entry name" value="Translation_prot_SH3-like_sf"/>
</dbReference>
<dbReference type="NCBIfam" id="TIGR01079">
    <property type="entry name" value="rplX_bact"/>
    <property type="match status" value="1"/>
</dbReference>
<dbReference type="PANTHER" id="PTHR12903">
    <property type="entry name" value="MITOCHONDRIAL RIBOSOMAL PROTEIN L24"/>
    <property type="match status" value="1"/>
</dbReference>
<dbReference type="Pfam" id="PF00467">
    <property type="entry name" value="KOW"/>
    <property type="match status" value="1"/>
</dbReference>
<dbReference type="Pfam" id="PF17136">
    <property type="entry name" value="ribosomal_L24"/>
    <property type="match status" value="1"/>
</dbReference>
<dbReference type="SMART" id="SM00739">
    <property type="entry name" value="KOW"/>
    <property type="match status" value="1"/>
</dbReference>
<dbReference type="SUPFAM" id="SSF50104">
    <property type="entry name" value="Translation proteins SH3-like domain"/>
    <property type="match status" value="1"/>
</dbReference>
<dbReference type="PROSITE" id="PS01108">
    <property type="entry name" value="RIBOSOMAL_L24"/>
    <property type="match status" value="1"/>
</dbReference>
<keyword id="KW-0687">Ribonucleoprotein</keyword>
<keyword id="KW-0689">Ribosomal protein</keyword>
<keyword id="KW-0694">RNA-binding</keyword>
<keyword id="KW-0699">rRNA-binding</keyword>
<feature type="chain" id="PRO_1000141967" description="Large ribosomal subunit protein uL24">
    <location>
        <begin position="1"/>
        <end position="101"/>
    </location>
</feature>